<sequence length="493" mass="53818">MNKQASQPRAIYYVVALQIWEYFSFYGMRALLILYLTNQLKYDDNHAYELFSAYCSLVYVTPILGGYLADKVLGNRMAVMLGAFLMAIGHLVLGASEIAPTFLYLSLAIIVCGYGLFKSNISCLLGELYQPEDPRRDGGFSLLYAAGNIGSIVAPIACGYVQEEYSWAMGFALAAIGMLAGLVIFLCGNRHFTHTTGVNKAVLCARNYLLPNWGWLLILLVAAPLLITVLFWKEWSVYALIVATAIGLVVLAKIYRQAQTAKQRKELGLIVTLTLFSMLFWAFAQQGGSSISLYIDRFVNRDILGYSVPTAMFQSVNAFAVMLCGVVLAWLVKESVSGNRTVRIWGKFALGLGLMSAGFCILTLSARWSAAYGHSSMPLMVLGLAVMGFAELFIDPVAMSQITRIDIPGVTGVLTGIYMLLSGAIANYLAGVIADQTSQSAFDASGAVNYAINAYVDVFEQITWGALACVGVVLLIWLYQSFKFKSRALAVES</sequence>
<dbReference type="EMBL" id="CP001363">
    <property type="protein sequence ID" value="ACY87333.1"/>
    <property type="status" value="ALT_INIT"/>
    <property type="molecule type" value="Genomic_DNA"/>
</dbReference>
<dbReference type="RefSeq" id="WP_001041123.1">
    <property type="nucleotide sequence ID" value="NZ_CP043402.1"/>
</dbReference>
<dbReference type="SMR" id="D0ZQC5"/>
<dbReference type="KEGG" id="seo:STM14_0829"/>
<dbReference type="PATRIC" id="fig|588858.6.peg.873"/>
<dbReference type="HOGENOM" id="CLU_004790_0_0_6"/>
<dbReference type="BioCyc" id="SENT588858:STM14_RS04165-MONOMER"/>
<dbReference type="Proteomes" id="UP000002695">
    <property type="component" value="Chromosome"/>
</dbReference>
<dbReference type="GO" id="GO:0005886">
    <property type="term" value="C:plasma membrane"/>
    <property type="evidence" value="ECO:0007669"/>
    <property type="project" value="UniProtKB-SubCell"/>
</dbReference>
<dbReference type="GO" id="GO:0071916">
    <property type="term" value="F:dipeptide transmembrane transporter activity"/>
    <property type="evidence" value="ECO:0007669"/>
    <property type="project" value="UniProtKB-UniRule"/>
</dbReference>
<dbReference type="GO" id="GO:0015333">
    <property type="term" value="F:peptide:proton symporter activity"/>
    <property type="evidence" value="ECO:0007669"/>
    <property type="project" value="UniProtKB-UniRule"/>
</dbReference>
<dbReference type="GO" id="GO:0015031">
    <property type="term" value="P:protein transport"/>
    <property type="evidence" value="ECO:0007669"/>
    <property type="project" value="UniProtKB-KW"/>
</dbReference>
<dbReference type="CDD" id="cd17346">
    <property type="entry name" value="MFS_DtpA_like"/>
    <property type="match status" value="1"/>
</dbReference>
<dbReference type="FunFam" id="1.20.1250.20:FF:000035">
    <property type="entry name" value="Dipeptide permease D"/>
    <property type="match status" value="1"/>
</dbReference>
<dbReference type="Gene3D" id="1.20.1250.20">
    <property type="entry name" value="MFS general substrate transporter like domains"/>
    <property type="match status" value="1"/>
</dbReference>
<dbReference type="HAMAP" id="MF_01880">
    <property type="entry name" value="PTR2_DtpD_subfam"/>
    <property type="match status" value="1"/>
</dbReference>
<dbReference type="InterPro" id="IPR023777">
    <property type="entry name" value="AA/pep_transptr_DtpD"/>
</dbReference>
<dbReference type="InterPro" id="IPR005279">
    <property type="entry name" value="Dipep/tripep_permease"/>
</dbReference>
<dbReference type="InterPro" id="IPR020846">
    <property type="entry name" value="MFS_dom"/>
</dbReference>
<dbReference type="InterPro" id="IPR036259">
    <property type="entry name" value="MFS_trans_sf"/>
</dbReference>
<dbReference type="InterPro" id="IPR050171">
    <property type="entry name" value="MFS_Transporters"/>
</dbReference>
<dbReference type="InterPro" id="IPR000109">
    <property type="entry name" value="POT_fam"/>
</dbReference>
<dbReference type="InterPro" id="IPR018456">
    <property type="entry name" value="PTR2_symporter_CS"/>
</dbReference>
<dbReference type="NCBIfam" id="NF012006">
    <property type="entry name" value="PRK15462.1"/>
    <property type="match status" value="1"/>
</dbReference>
<dbReference type="NCBIfam" id="TIGR00924">
    <property type="entry name" value="yjdL_sub1_fam"/>
    <property type="match status" value="1"/>
</dbReference>
<dbReference type="PANTHER" id="PTHR23517:SF15">
    <property type="entry name" value="PROTON-DEPENDENT OLIGOPEPTIDE FAMILY TRANSPORT PROTEIN"/>
    <property type="match status" value="1"/>
</dbReference>
<dbReference type="PANTHER" id="PTHR23517">
    <property type="entry name" value="RESISTANCE PROTEIN MDTM, PUTATIVE-RELATED-RELATED"/>
    <property type="match status" value="1"/>
</dbReference>
<dbReference type="Pfam" id="PF00854">
    <property type="entry name" value="PTR2"/>
    <property type="match status" value="1"/>
</dbReference>
<dbReference type="SUPFAM" id="SSF103473">
    <property type="entry name" value="MFS general substrate transporter"/>
    <property type="match status" value="1"/>
</dbReference>
<dbReference type="PROSITE" id="PS50850">
    <property type="entry name" value="MFS"/>
    <property type="match status" value="1"/>
</dbReference>
<dbReference type="PROSITE" id="PS01022">
    <property type="entry name" value="PTR2_1"/>
    <property type="match status" value="1"/>
</dbReference>
<dbReference type="PROSITE" id="PS01023">
    <property type="entry name" value="PTR2_2"/>
    <property type="match status" value="1"/>
</dbReference>
<accession>D0ZQC5</accession>
<gene>
    <name evidence="1" type="primary">dtpD</name>
    <name type="ordered locus">STM14_0829</name>
</gene>
<organism>
    <name type="scientific">Salmonella typhimurium (strain 14028s / SGSC 2262)</name>
    <dbReference type="NCBI Taxonomy" id="588858"/>
    <lineage>
        <taxon>Bacteria</taxon>
        <taxon>Pseudomonadati</taxon>
        <taxon>Pseudomonadota</taxon>
        <taxon>Gammaproteobacteria</taxon>
        <taxon>Enterobacterales</taxon>
        <taxon>Enterobacteriaceae</taxon>
        <taxon>Salmonella</taxon>
    </lineage>
</organism>
<feature type="chain" id="PRO_0000395301" description="Dipeptide permease D">
    <location>
        <begin position="1"/>
        <end position="493"/>
    </location>
</feature>
<feature type="transmembrane region" description="Helical" evidence="1">
    <location>
        <begin position="14"/>
        <end position="34"/>
    </location>
</feature>
<feature type="transmembrane region" description="Helical" evidence="1">
    <location>
        <begin position="49"/>
        <end position="69"/>
    </location>
</feature>
<feature type="transmembrane region" description="Helical" evidence="1">
    <location>
        <begin position="91"/>
        <end position="111"/>
    </location>
</feature>
<feature type="transmembrane region" description="Helical" evidence="1">
    <location>
        <begin position="138"/>
        <end position="158"/>
    </location>
</feature>
<feature type="transmembrane region" description="Helical" evidence="1">
    <location>
        <begin position="167"/>
        <end position="187"/>
    </location>
</feature>
<feature type="transmembrane region" description="Helical" evidence="1">
    <location>
        <begin position="212"/>
        <end position="232"/>
    </location>
</feature>
<feature type="transmembrane region" description="Helical" evidence="1">
    <location>
        <begin position="235"/>
        <end position="255"/>
    </location>
</feature>
<feature type="transmembrane region" description="Helical" evidence="1">
    <location>
        <begin position="267"/>
        <end position="287"/>
    </location>
</feature>
<feature type="transmembrane region" description="Helical" evidence="1">
    <location>
        <begin position="312"/>
        <end position="332"/>
    </location>
</feature>
<feature type="transmembrane region" description="Helical" evidence="1">
    <location>
        <begin position="344"/>
        <end position="364"/>
    </location>
</feature>
<feature type="transmembrane region" description="Helical" evidence="1">
    <location>
        <begin position="379"/>
        <end position="399"/>
    </location>
</feature>
<feature type="transmembrane region" description="Helical" evidence="1">
    <location>
        <begin position="413"/>
        <end position="433"/>
    </location>
</feature>
<feature type="transmembrane region" description="Helical" evidence="1">
    <location>
        <begin position="458"/>
        <end position="478"/>
    </location>
</feature>
<keyword id="KW-0997">Cell inner membrane</keyword>
<keyword id="KW-1003">Cell membrane</keyword>
<keyword id="KW-0472">Membrane</keyword>
<keyword id="KW-0571">Peptide transport</keyword>
<keyword id="KW-0653">Protein transport</keyword>
<keyword id="KW-0812">Transmembrane</keyword>
<keyword id="KW-1133">Transmembrane helix</keyword>
<keyword id="KW-0813">Transport</keyword>
<evidence type="ECO:0000255" key="1">
    <source>
        <dbReference type="HAMAP-Rule" id="MF_01880"/>
    </source>
</evidence>
<evidence type="ECO:0000305" key="2"/>
<comment type="function">
    <text evidence="1">Probable proton-dependent permease that transports dipeptides.</text>
</comment>
<comment type="subcellular location">
    <subcellularLocation>
        <location evidence="1">Cell inner membrane</location>
        <topology evidence="1">Multi-pass membrane protein</topology>
    </subcellularLocation>
</comment>
<comment type="similarity">
    <text evidence="1">Belongs to the major facilitator superfamily. Proton-dependent oligopeptide transporter (POT/PTR) (TC 2.A.17) family. DtpD subfamily.</text>
</comment>
<comment type="sequence caution" evidence="2">
    <conflict type="erroneous initiation">
        <sequence resource="EMBL-CDS" id="ACY87333"/>
    </conflict>
    <text>Extended N-terminus.</text>
</comment>
<reference key="1">
    <citation type="journal article" date="2010" name="J. Bacteriol.">
        <title>Short-term signatures of evolutionary change in the Salmonella enterica serovar typhimurium 14028 genome.</title>
        <authorList>
            <person name="Jarvik T."/>
            <person name="Smillie C."/>
            <person name="Groisman E.A."/>
            <person name="Ochman H."/>
        </authorList>
    </citation>
    <scope>NUCLEOTIDE SEQUENCE [LARGE SCALE GENOMIC DNA]</scope>
    <source>
        <strain>14028s / SGSC 2262</strain>
    </source>
</reference>
<name>DTPD_SALT1</name>
<protein>
    <recommendedName>
        <fullName evidence="1">Dipeptide permease D</fullName>
    </recommendedName>
</protein>
<proteinExistence type="inferred from homology"/>